<comment type="function">
    <text evidence="1">Involved in transcription antitermination. Required for transcription of ribosomal RNA (rRNA) genes. Binds specifically to the boxA antiterminator sequence of the ribosomal RNA (rrn) operons.</text>
</comment>
<comment type="similarity">
    <text evidence="1">Belongs to the NusB family.</text>
</comment>
<dbReference type="EMBL" id="CP000444">
    <property type="protein sequence ID" value="ABI42165.1"/>
    <property type="molecule type" value="Genomic_DNA"/>
</dbReference>
<dbReference type="SMR" id="Q0HXJ0"/>
<dbReference type="KEGG" id="shm:Shewmr7_1166"/>
<dbReference type="HOGENOM" id="CLU_087843_4_1_6"/>
<dbReference type="GO" id="GO:0005829">
    <property type="term" value="C:cytosol"/>
    <property type="evidence" value="ECO:0007669"/>
    <property type="project" value="TreeGrafter"/>
</dbReference>
<dbReference type="GO" id="GO:0003723">
    <property type="term" value="F:RNA binding"/>
    <property type="evidence" value="ECO:0007669"/>
    <property type="project" value="UniProtKB-UniRule"/>
</dbReference>
<dbReference type="GO" id="GO:0006353">
    <property type="term" value="P:DNA-templated transcription termination"/>
    <property type="evidence" value="ECO:0007669"/>
    <property type="project" value="UniProtKB-UniRule"/>
</dbReference>
<dbReference type="GO" id="GO:0031564">
    <property type="term" value="P:transcription antitermination"/>
    <property type="evidence" value="ECO:0007669"/>
    <property type="project" value="UniProtKB-KW"/>
</dbReference>
<dbReference type="CDD" id="cd00619">
    <property type="entry name" value="Terminator_NusB"/>
    <property type="match status" value="1"/>
</dbReference>
<dbReference type="FunFam" id="1.10.940.10:FF:000001">
    <property type="entry name" value="Transcription antitermination factor NusB"/>
    <property type="match status" value="1"/>
</dbReference>
<dbReference type="Gene3D" id="1.10.940.10">
    <property type="entry name" value="NusB-like"/>
    <property type="match status" value="1"/>
</dbReference>
<dbReference type="HAMAP" id="MF_00073">
    <property type="entry name" value="NusB"/>
    <property type="match status" value="1"/>
</dbReference>
<dbReference type="InterPro" id="IPR035926">
    <property type="entry name" value="NusB-like_sf"/>
</dbReference>
<dbReference type="InterPro" id="IPR011605">
    <property type="entry name" value="NusB_fam"/>
</dbReference>
<dbReference type="InterPro" id="IPR006027">
    <property type="entry name" value="NusB_RsmB_TIM44"/>
</dbReference>
<dbReference type="NCBIfam" id="TIGR01951">
    <property type="entry name" value="nusB"/>
    <property type="match status" value="1"/>
</dbReference>
<dbReference type="PANTHER" id="PTHR11078:SF3">
    <property type="entry name" value="ANTITERMINATION NUSB DOMAIN-CONTAINING PROTEIN"/>
    <property type="match status" value="1"/>
</dbReference>
<dbReference type="PANTHER" id="PTHR11078">
    <property type="entry name" value="N UTILIZATION SUBSTANCE PROTEIN B-RELATED"/>
    <property type="match status" value="1"/>
</dbReference>
<dbReference type="Pfam" id="PF01029">
    <property type="entry name" value="NusB"/>
    <property type="match status" value="1"/>
</dbReference>
<dbReference type="SUPFAM" id="SSF48013">
    <property type="entry name" value="NusB-like"/>
    <property type="match status" value="1"/>
</dbReference>
<keyword id="KW-0694">RNA-binding</keyword>
<keyword id="KW-0804">Transcription</keyword>
<keyword id="KW-0889">Transcription antitermination</keyword>
<keyword id="KW-0805">Transcription regulation</keyword>
<accession>Q0HXJ0</accession>
<gene>
    <name evidence="1" type="primary">nusB</name>
    <name type="ordered locus">Shewmr7_1166</name>
</gene>
<protein>
    <recommendedName>
        <fullName evidence="1">Transcription antitermination protein NusB</fullName>
    </recommendedName>
    <alternativeName>
        <fullName evidence="1">Antitermination factor NusB</fullName>
    </alternativeName>
</protein>
<name>NUSB_SHESR</name>
<sequence length="134" mass="15184">MKPSERRKARRLAVQAIYSWQLSGNNIADVEHEFLTEQSLDGVDVAYFRELFAGVATKKTQLDELFIPHLDRPIDEVSPVEKAIVRLAAYELTFRKDVPFKVAINEAIELAKAFGADESHKFVNGLLDKLVARK</sequence>
<feature type="chain" id="PRO_0000265591" description="Transcription antitermination protein NusB">
    <location>
        <begin position="1"/>
        <end position="134"/>
    </location>
</feature>
<evidence type="ECO:0000255" key="1">
    <source>
        <dbReference type="HAMAP-Rule" id="MF_00073"/>
    </source>
</evidence>
<proteinExistence type="inferred from homology"/>
<reference key="1">
    <citation type="submission" date="2006-08" db="EMBL/GenBank/DDBJ databases">
        <title>Complete sequence of chromosome 1 of Shewanella sp. MR-7.</title>
        <authorList>
            <person name="Copeland A."/>
            <person name="Lucas S."/>
            <person name="Lapidus A."/>
            <person name="Barry K."/>
            <person name="Detter J.C."/>
            <person name="Glavina del Rio T."/>
            <person name="Hammon N."/>
            <person name="Israni S."/>
            <person name="Dalin E."/>
            <person name="Tice H."/>
            <person name="Pitluck S."/>
            <person name="Kiss H."/>
            <person name="Brettin T."/>
            <person name="Bruce D."/>
            <person name="Han C."/>
            <person name="Tapia R."/>
            <person name="Gilna P."/>
            <person name="Schmutz J."/>
            <person name="Larimer F."/>
            <person name="Land M."/>
            <person name="Hauser L."/>
            <person name="Kyrpides N."/>
            <person name="Mikhailova N."/>
            <person name="Nealson K."/>
            <person name="Konstantinidis K."/>
            <person name="Klappenbach J."/>
            <person name="Tiedje J."/>
            <person name="Richardson P."/>
        </authorList>
    </citation>
    <scope>NUCLEOTIDE SEQUENCE [LARGE SCALE GENOMIC DNA]</scope>
    <source>
        <strain>MR-7</strain>
    </source>
</reference>
<organism>
    <name type="scientific">Shewanella sp. (strain MR-7)</name>
    <dbReference type="NCBI Taxonomy" id="60481"/>
    <lineage>
        <taxon>Bacteria</taxon>
        <taxon>Pseudomonadati</taxon>
        <taxon>Pseudomonadota</taxon>
        <taxon>Gammaproteobacteria</taxon>
        <taxon>Alteromonadales</taxon>
        <taxon>Shewanellaceae</taxon>
        <taxon>Shewanella</taxon>
    </lineage>
</organism>